<accession>Q12404</accession>
<accession>D6W2Y6</accession>
<keyword id="KW-0002">3D-structure</keyword>
<keyword id="KW-1015">Disulfide bond</keyword>
<keyword id="KW-0256">Endoplasmic reticulum</keyword>
<keyword id="KW-0325">Glycoprotein</keyword>
<keyword id="KW-0413">Isomerase</keyword>
<keyword id="KW-0676">Redox-active center</keyword>
<keyword id="KW-1185">Reference proteome</keyword>
<keyword id="KW-0732">Signal</keyword>
<comment type="function">
    <text evidence="5">Participates in the folding of proteins containing disulfide bonds.</text>
</comment>
<comment type="catalytic activity">
    <reaction>
        <text>Catalyzes the rearrangement of -S-S- bonds in proteins.</text>
        <dbReference type="EC" id="5.3.4.1"/>
    </reaction>
</comment>
<comment type="subunit">
    <text evidence="5">Interacts with CNE1 and EPS1.</text>
</comment>
<comment type="subcellular location">
    <subcellularLocation>
        <location evidence="3">Endoplasmic reticulum lumen</location>
    </subcellularLocation>
</comment>
<comment type="miscellaneous">
    <text evidence="4">Present with 830 molecules/cell in log phase SD medium.</text>
</comment>
<comment type="similarity">
    <text evidence="6">Belongs to the protein disulfide isomerase family.</text>
</comment>
<organism>
    <name type="scientific">Saccharomyces cerevisiae (strain ATCC 204508 / S288c)</name>
    <name type="common">Baker's yeast</name>
    <dbReference type="NCBI Taxonomy" id="559292"/>
    <lineage>
        <taxon>Eukaryota</taxon>
        <taxon>Fungi</taxon>
        <taxon>Dikarya</taxon>
        <taxon>Ascomycota</taxon>
        <taxon>Saccharomycotina</taxon>
        <taxon>Saccharomycetes</taxon>
        <taxon>Saccharomycetales</taxon>
        <taxon>Saccharomycetaceae</taxon>
        <taxon>Saccharomyces</taxon>
    </lineage>
</organism>
<dbReference type="EC" id="5.3.4.1"/>
<dbReference type="EMBL" id="D34633">
    <property type="protein sequence ID" value="BAA07015.1"/>
    <property type="molecule type" value="Genomic_DNA"/>
</dbReference>
<dbReference type="EMBL" id="X89633">
    <property type="protein sequence ID" value="CAA61791.1"/>
    <property type="molecule type" value="Genomic_DNA"/>
</dbReference>
<dbReference type="EMBL" id="Z75196">
    <property type="protein sequence ID" value="CAA99515.1"/>
    <property type="molecule type" value="Genomic_DNA"/>
</dbReference>
<dbReference type="EMBL" id="BK006948">
    <property type="protein sequence ID" value="DAA11052.1"/>
    <property type="molecule type" value="Genomic_DNA"/>
</dbReference>
<dbReference type="PIR" id="S67190">
    <property type="entry name" value="S67190"/>
</dbReference>
<dbReference type="RefSeq" id="NP_014931.3">
    <property type="nucleotide sequence ID" value="NM_001183707.3"/>
</dbReference>
<dbReference type="PDB" id="3ED3">
    <property type="method" value="X-ray"/>
    <property type="resolution" value="2.00 A"/>
    <property type="chains" value="A/B=23-310"/>
</dbReference>
<dbReference type="PDBsum" id="3ED3"/>
<dbReference type="SMR" id="Q12404"/>
<dbReference type="BioGRID" id="34675">
    <property type="interactions" value="94"/>
</dbReference>
<dbReference type="DIP" id="DIP-4085N"/>
<dbReference type="FunCoup" id="Q12404">
    <property type="interactions" value="284"/>
</dbReference>
<dbReference type="IntAct" id="Q12404">
    <property type="interactions" value="4"/>
</dbReference>
<dbReference type="STRING" id="4932.YOR288C"/>
<dbReference type="GlyCosmos" id="Q12404">
    <property type="glycosylation" value="2 sites, No reported glycans"/>
</dbReference>
<dbReference type="GlyGen" id="Q12404">
    <property type="glycosylation" value="2 sites"/>
</dbReference>
<dbReference type="PaxDb" id="4932-YOR288C"/>
<dbReference type="PeptideAtlas" id="Q12404"/>
<dbReference type="EnsemblFungi" id="YOR288C_mRNA">
    <property type="protein sequence ID" value="YOR288C"/>
    <property type="gene ID" value="YOR288C"/>
</dbReference>
<dbReference type="GeneID" id="854462"/>
<dbReference type="KEGG" id="sce:YOR288C"/>
<dbReference type="AGR" id="SGD:S000005814"/>
<dbReference type="SGD" id="S000005814">
    <property type="gene designation" value="MPD1"/>
</dbReference>
<dbReference type="VEuPathDB" id="FungiDB:YOR288C"/>
<dbReference type="eggNOG" id="KOG0191">
    <property type="taxonomic scope" value="Eukaryota"/>
</dbReference>
<dbReference type="HOGENOM" id="CLU_059951_0_0_1"/>
<dbReference type="InParanoid" id="Q12404"/>
<dbReference type="OMA" id="QVASVNC"/>
<dbReference type="OrthoDB" id="10264505at2759"/>
<dbReference type="BioCyc" id="YEAST:YOR288C-MONOMER"/>
<dbReference type="BioGRID-ORCS" id="854462">
    <property type="hits" value="0 hits in 10 CRISPR screens"/>
</dbReference>
<dbReference type="EvolutionaryTrace" id="Q12404"/>
<dbReference type="PRO" id="PR:Q12404"/>
<dbReference type="Proteomes" id="UP000002311">
    <property type="component" value="Chromosome XV"/>
</dbReference>
<dbReference type="RNAct" id="Q12404">
    <property type="molecule type" value="protein"/>
</dbReference>
<dbReference type="GO" id="GO:0005783">
    <property type="term" value="C:endoplasmic reticulum"/>
    <property type="evidence" value="ECO:0007005"/>
    <property type="project" value="SGD"/>
</dbReference>
<dbReference type="GO" id="GO:0005788">
    <property type="term" value="C:endoplasmic reticulum lumen"/>
    <property type="evidence" value="ECO:0007669"/>
    <property type="project" value="UniProtKB-SubCell"/>
</dbReference>
<dbReference type="GO" id="GO:0000324">
    <property type="term" value="C:fungal-type vacuole"/>
    <property type="evidence" value="ECO:0007005"/>
    <property type="project" value="SGD"/>
</dbReference>
<dbReference type="GO" id="GO:0003756">
    <property type="term" value="F:protein disulfide isomerase activity"/>
    <property type="evidence" value="ECO:0000314"/>
    <property type="project" value="SGD"/>
</dbReference>
<dbReference type="GO" id="GO:0019153">
    <property type="term" value="F:protein-disulfide reductase (glutathione) activity"/>
    <property type="evidence" value="ECO:0000314"/>
    <property type="project" value="SGD"/>
</dbReference>
<dbReference type="GO" id="GO:0015035">
    <property type="term" value="F:protein-disulfide reductase activity"/>
    <property type="evidence" value="ECO:0000314"/>
    <property type="project" value="SGD"/>
</dbReference>
<dbReference type="GO" id="GO:0006457">
    <property type="term" value="P:protein folding"/>
    <property type="evidence" value="ECO:0000316"/>
    <property type="project" value="SGD"/>
</dbReference>
<dbReference type="GO" id="GO:0034976">
    <property type="term" value="P:response to endoplasmic reticulum stress"/>
    <property type="evidence" value="ECO:0000318"/>
    <property type="project" value="GO_Central"/>
</dbReference>
<dbReference type="CDD" id="cd03002">
    <property type="entry name" value="PDI_a_MPD1_like"/>
    <property type="match status" value="1"/>
</dbReference>
<dbReference type="Gene3D" id="3.40.30.10">
    <property type="entry name" value="Glutaredoxin"/>
    <property type="match status" value="2"/>
</dbReference>
<dbReference type="InterPro" id="IPR036249">
    <property type="entry name" value="Thioredoxin-like_sf"/>
</dbReference>
<dbReference type="InterPro" id="IPR017937">
    <property type="entry name" value="Thioredoxin_CS"/>
</dbReference>
<dbReference type="InterPro" id="IPR013766">
    <property type="entry name" value="Thioredoxin_domain"/>
</dbReference>
<dbReference type="PANTHER" id="PTHR45815">
    <property type="entry name" value="PROTEIN DISULFIDE-ISOMERASE A6"/>
    <property type="match status" value="1"/>
</dbReference>
<dbReference type="PANTHER" id="PTHR45815:SF3">
    <property type="entry name" value="PROTEIN DISULFIDE-ISOMERASE A6"/>
    <property type="match status" value="1"/>
</dbReference>
<dbReference type="Pfam" id="PF00085">
    <property type="entry name" value="Thioredoxin"/>
    <property type="match status" value="1"/>
</dbReference>
<dbReference type="PRINTS" id="PR00421">
    <property type="entry name" value="THIOREDOXIN"/>
</dbReference>
<dbReference type="SUPFAM" id="SSF52833">
    <property type="entry name" value="Thioredoxin-like"/>
    <property type="match status" value="1"/>
</dbReference>
<dbReference type="PROSITE" id="PS00014">
    <property type="entry name" value="ER_TARGET"/>
    <property type="match status" value="1"/>
</dbReference>
<dbReference type="PROSITE" id="PS00194">
    <property type="entry name" value="THIOREDOXIN_1"/>
    <property type="match status" value="1"/>
</dbReference>
<dbReference type="PROSITE" id="PS51352">
    <property type="entry name" value="THIOREDOXIN_2"/>
    <property type="match status" value="1"/>
</dbReference>
<protein>
    <recommendedName>
        <fullName>Protein disulfide-isomerase MPD1</fullName>
        <ecNumber>5.3.4.1</ecNumber>
    </recommendedName>
</protein>
<name>MPD1_YEAST</name>
<sequence length="318" mass="36408">MLFLNIIKLLLGLFIMNEVKAQNFYDSDPHISELTPKSFDKAIHNTNYTSLVEFYAPWCGHCKKLSSTFRKAAKRLDGVVQVAAVNCDLNKNKALCAKYDVNGFPTLMVFRPPKIDLSKPIDNAKKSFSAHANEVYSGARTLAPIVDFSLSRIRSYVKKFVRIDTLGSLLRKSPKLSVVLFSKQDKISPVYKSIALDWLGKFDFYSISNKKLKQLTDMNPTYEKTPEIFKYLQKVIPEQRQSDKSKLVVFDADKDKFWEYEGNSINKNDISKFLRDTFSITPNEGPFSRRSEYIAYLKTGKKPIKKNHSSSGNKHDEL</sequence>
<gene>
    <name type="primary">MPD1</name>
    <name type="ordered locus">YOR288C</name>
</gene>
<proteinExistence type="evidence at protein level"/>
<evidence type="ECO:0000255" key="1"/>
<evidence type="ECO:0000255" key="2">
    <source>
        <dbReference type="PROSITE-ProRule" id="PRU00691"/>
    </source>
</evidence>
<evidence type="ECO:0000255" key="3">
    <source>
        <dbReference type="PROSITE-ProRule" id="PRU10138"/>
    </source>
</evidence>
<evidence type="ECO:0000269" key="4">
    <source>
    </source>
</evidence>
<evidence type="ECO:0000269" key="5">
    <source>
    </source>
</evidence>
<evidence type="ECO:0000305" key="6"/>
<evidence type="ECO:0007829" key="7">
    <source>
        <dbReference type="PDB" id="3ED3"/>
    </source>
</evidence>
<reference key="1">
    <citation type="journal article" date="1995" name="FEBS Lett.">
        <title>Isolation and characterization of a yeast gene, MPD1, the overexpression of which suppresses inviability caused by protein disulfide isomerase depletion.</title>
        <authorList>
            <person name="Tachikawa H."/>
            <person name="Takeuchi Y."/>
            <person name="Funahashi W."/>
            <person name="Miura T."/>
            <person name="Gao X.D."/>
            <person name="Fujimoto D."/>
            <person name="Mizunaga T."/>
            <person name="Onodera K."/>
        </authorList>
    </citation>
    <scope>NUCLEOTIDE SEQUENCE [GENOMIC DNA]</scope>
</reference>
<reference key="2">
    <citation type="journal article" date="1996" name="Yeast">
        <title>DNA sequence analysis of the VPH1-SNF2 region on chromosome XV of Saccharomyces cerevisiae.</title>
        <authorList>
            <person name="Cheret G."/>
            <person name="Bernardi A."/>
            <person name="Sor F.J."/>
        </authorList>
    </citation>
    <scope>NUCLEOTIDE SEQUENCE [GENOMIC DNA]</scope>
    <source>
        <strain>ATCC 204508 / S288c</strain>
    </source>
</reference>
<reference key="3">
    <citation type="journal article" date="1997" name="Nature">
        <title>The nucleotide sequence of Saccharomyces cerevisiae chromosome XV.</title>
        <authorList>
            <person name="Dujon B."/>
            <person name="Albermann K."/>
            <person name="Aldea M."/>
            <person name="Alexandraki D."/>
            <person name="Ansorge W."/>
            <person name="Arino J."/>
            <person name="Benes V."/>
            <person name="Bohn C."/>
            <person name="Bolotin-Fukuhara M."/>
            <person name="Bordonne R."/>
            <person name="Boyer J."/>
            <person name="Camasses A."/>
            <person name="Casamayor A."/>
            <person name="Casas C."/>
            <person name="Cheret G."/>
            <person name="Cziepluch C."/>
            <person name="Daignan-Fornier B."/>
            <person name="Dang V.-D."/>
            <person name="de Haan M."/>
            <person name="Delius H."/>
            <person name="Durand P."/>
            <person name="Fairhead C."/>
            <person name="Feldmann H."/>
            <person name="Gaillon L."/>
            <person name="Galisson F."/>
            <person name="Gamo F.-J."/>
            <person name="Gancedo C."/>
            <person name="Goffeau A."/>
            <person name="Goulding S.E."/>
            <person name="Grivell L.A."/>
            <person name="Habbig B."/>
            <person name="Hand N.J."/>
            <person name="Hani J."/>
            <person name="Hattenhorst U."/>
            <person name="Hebling U."/>
            <person name="Hernando Y."/>
            <person name="Herrero E."/>
            <person name="Heumann K."/>
            <person name="Hiesel R."/>
            <person name="Hilger F."/>
            <person name="Hofmann B."/>
            <person name="Hollenberg C.P."/>
            <person name="Hughes B."/>
            <person name="Jauniaux J.-C."/>
            <person name="Kalogeropoulos A."/>
            <person name="Katsoulou C."/>
            <person name="Kordes E."/>
            <person name="Lafuente M.J."/>
            <person name="Landt O."/>
            <person name="Louis E.J."/>
            <person name="Maarse A.C."/>
            <person name="Madania A."/>
            <person name="Mannhaupt G."/>
            <person name="Marck C."/>
            <person name="Martin R.P."/>
            <person name="Mewes H.-W."/>
            <person name="Michaux G."/>
            <person name="Paces V."/>
            <person name="Parle-McDermott A.G."/>
            <person name="Pearson B.M."/>
            <person name="Perrin A."/>
            <person name="Pettersson B."/>
            <person name="Poch O."/>
            <person name="Pohl T.M."/>
            <person name="Poirey R."/>
            <person name="Portetelle D."/>
            <person name="Pujol A."/>
            <person name="Purnelle B."/>
            <person name="Ramezani Rad M."/>
            <person name="Rechmann S."/>
            <person name="Schwager C."/>
            <person name="Schweizer M."/>
            <person name="Sor F."/>
            <person name="Sterky F."/>
            <person name="Tarassov I.A."/>
            <person name="Teodoru C."/>
            <person name="Tettelin H."/>
            <person name="Thierry A."/>
            <person name="Tobiasch E."/>
            <person name="Tzermia M."/>
            <person name="Uhlen M."/>
            <person name="Unseld M."/>
            <person name="Valens M."/>
            <person name="Vandenbol M."/>
            <person name="Vetter I."/>
            <person name="Vlcek C."/>
            <person name="Voet M."/>
            <person name="Volckaert G."/>
            <person name="Voss H."/>
            <person name="Wambutt R."/>
            <person name="Wedler H."/>
            <person name="Wiemann S."/>
            <person name="Winsor B."/>
            <person name="Wolfe K.H."/>
            <person name="Zollner A."/>
            <person name="Zumstein E."/>
            <person name="Kleine K."/>
        </authorList>
    </citation>
    <scope>NUCLEOTIDE SEQUENCE [LARGE SCALE GENOMIC DNA]</scope>
    <source>
        <strain>ATCC 204508 / S288c</strain>
    </source>
</reference>
<reference key="4">
    <citation type="journal article" date="2014" name="G3 (Bethesda)">
        <title>The reference genome sequence of Saccharomyces cerevisiae: Then and now.</title>
        <authorList>
            <person name="Engel S.R."/>
            <person name="Dietrich F.S."/>
            <person name="Fisk D.G."/>
            <person name="Binkley G."/>
            <person name="Balakrishnan R."/>
            <person name="Costanzo M.C."/>
            <person name="Dwight S.S."/>
            <person name="Hitz B.C."/>
            <person name="Karra K."/>
            <person name="Nash R.S."/>
            <person name="Weng S."/>
            <person name="Wong E.D."/>
            <person name="Lloyd P."/>
            <person name="Skrzypek M.S."/>
            <person name="Miyasato S.R."/>
            <person name="Simison M."/>
            <person name="Cherry J.M."/>
        </authorList>
    </citation>
    <scope>GENOME REANNOTATION</scope>
    <source>
        <strain>ATCC 204508 / S288c</strain>
    </source>
</reference>
<reference key="5">
    <citation type="journal article" date="2003" name="Nature">
        <title>Global analysis of protein expression in yeast.</title>
        <authorList>
            <person name="Ghaemmaghami S."/>
            <person name="Huh W.-K."/>
            <person name="Bower K."/>
            <person name="Howson R.W."/>
            <person name="Belle A."/>
            <person name="Dephoure N."/>
            <person name="O'Shea E.K."/>
            <person name="Weissman J.S."/>
        </authorList>
    </citation>
    <scope>LEVEL OF PROTEIN EXPRESSION [LARGE SCALE ANALYSIS]</scope>
</reference>
<reference key="6">
    <citation type="journal article" date="2005" name="J. Biol. Chem.">
        <title>Interactions among yeast protein-disulfide isomerase proteins and endoplasmic reticulum chaperone proteins influence their activities.</title>
        <authorList>
            <person name="Kimura T."/>
            <person name="Hosoda Y."/>
            <person name="Sato Y."/>
            <person name="Kitamura Y."/>
            <person name="Ikeda T."/>
            <person name="Horibe T."/>
            <person name="Kikuchi M."/>
        </authorList>
    </citation>
    <scope>FUNCTION</scope>
    <scope>INTERACTION WITH CNE1 AND EPS1</scope>
</reference>
<feature type="signal peptide" evidence="1">
    <location>
        <begin position="1"/>
        <end position="21"/>
    </location>
</feature>
<feature type="chain" id="PRO_0000034220" description="Protein disulfide-isomerase MPD1">
    <location>
        <begin position="22"/>
        <end position="318"/>
    </location>
</feature>
<feature type="domain" description="Thioredoxin" evidence="2">
    <location>
        <begin position="22"/>
        <end position="158"/>
    </location>
</feature>
<feature type="short sequence motif" description="Prevents secretion from ER" evidence="3">
    <location>
        <begin position="315"/>
        <end position="318"/>
    </location>
</feature>
<feature type="glycosylation site" description="N-linked (GlcNAc...) asparagine" evidence="1">
    <location>
        <position position="47"/>
    </location>
</feature>
<feature type="glycosylation site" description="N-linked (GlcNAc...) asparagine" evidence="1">
    <location>
        <position position="307"/>
    </location>
</feature>
<feature type="disulfide bond" description="Redox-active" evidence="2">
    <location>
        <begin position="59"/>
        <end position="62"/>
    </location>
</feature>
<feature type="helix" evidence="7">
    <location>
        <begin position="36"/>
        <end position="43"/>
    </location>
</feature>
<feature type="strand" evidence="7">
    <location>
        <begin position="45"/>
        <end position="48"/>
    </location>
</feature>
<feature type="strand" evidence="7">
    <location>
        <begin position="50"/>
        <end position="55"/>
    </location>
</feature>
<feature type="helix" evidence="7">
    <location>
        <begin position="60"/>
        <end position="63"/>
    </location>
</feature>
<feature type="helix" evidence="7">
    <location>
        <begin position="66"/>
        <end position="75"/>
    </location>
</feature>
<feature type="turn" evidence="7">
    <location>
        <begin position="76"/>
        <end position="79"/>
    </location>
</feature>
<feature type="strand" evidence="7">
    <location>
        <begin position="80"/>
        <end position="86"/>
    </location>
</feature>
<feature type="turn" evidence="7">
    <location>
        <begin position="90"/>
        <end position="92"/>
    </location>
</feature>
<feature type="helix" evidence="7">
    <location>
        <begin position="93"/>
        <end position="98"/>
    </location>
</feature>
<feature type="strand" evidence="7">
    <location>
        <begin position="103"/>
        <end position="111"/>
    </location>
</feature>
<feature type="strand" evidence="7">
    <location>
        <begin position="132"/>
        <end position="135"/>
    </location>
</feature>
<feature type="helix" evidence="7">
    <location>
        <begin position="142"/>
        <end position="150"/>
    </location>
</feature>
<feature type="strand" evidence="7">
    <location>
        <begin position="157"/>
        <end position="159"/>
    </location>
</feature>
<feature type="helix" evidence="7">
    <location>
        <begin position="163"/>
        <end position="165"/>
    </location>
</feature>
<feature type="helix" evidence="7">
    <location>
        <begin position="166"/>
        <end position="170"/>
    </location>
</feature>
<feature type="strand" evidence="7">
    <location>
        <begin position="174"/>
        <end position="186"/>
    </location>
</feature>
<feature type="helix" evidence="7">
    <location>
        <begin position="189"/>
        <end position="197"/>
    </location>
</feature>
<feature type="strand" evidence="7">
    <location>
        <begin position="202"/>
        <end position="208"/>
    </location>
</feature>
<feature type="helix" evidence="7">
    <location>
        <begin position="209"/>
        <end position="211"/>
    </location>
</feature>
<feature type="helix" evidence="7">
    <location>
        <begin position="226"/>
        <end position="239"/>
    </location>
</feature>
<feature type="strand" evidence="7">
    <location>
        <begin position="246"/>
        <end position="251"/>
    </location>
</feature>
<feature type="turn" evidence="7">
    <location>
        <begin position="252"/>
        <end position="255"/>
    </location>
</feature>
<feature type="strand" evidence="7">
    <location>
        <begin position="256"/>
        <end position="259"/>
    </location>
</feature>
<feature type="helix" evidence="7">
    <location>
        <begin position="267"/>
        <end position="278"/>
    </location>
</feature>
<feature type="strand" evidence="7">
    <location>
        <begin position="283"/>
        <end position="285"/>
    </location>
</feature>
<feature type="helix" evidence="7">
    <location>
        <begin position="289"/>
        <end position="299"/>
    </location>
</feature>